<protein>
    <recommendedName>
        <fullName evidence="1">Holliday junction branch migration complex subunit RuvB</fullName>
        <ecNumber evidence="1">3.6.4.-</ecNumber>
    </recommendedName>
</protein>
<dbReference type="EC" id="3.6.4.-" evidence="1"/>
<dbReference type="EMBL" id="AM408590">
    <property type="protein sequence ID" value="CAL72603.1"/>
    <property type="molecule type" value="Genomic_DNA"/>
</dbReference>
<dbReference type="RefSeq" id="WP_003413416.1">
    <property type="nucleotide sequence ID" value="NC_008769.1"/>
</dbReference>
<dbReference type="SMR" id="A1KLU0"/>
<dbReference type="GeneID" id="45426594"/>
<dbReference type="KEGG" id="mbb:BCG_2615c"/>
<dbReference type="HOGENOM" id="CLU_055599_1_0_11"/>
<dbReference type="Proteomes" id="UP000001472">
    <property type="component" value="Chromosome"/>
</dbReference>
<dbReference type="GO" id="GO:0005737">
    <property type="term" value="C:cytoplasm"/>
    <property type="evidence" value="ECO:0007669"/>
    <property type="project" value="UniProtKB-SubCell"/>
</dbReference>
<dbReference type="GO" id="GO:0048476">
    <property type="term" value="C:Holliday junction resolvase complex"/>
    <property type="evidence" value="ECO:0007669"/>
    <property type="project" value="UniProtKB-UniRule"/>
</dbReference>
<dbReference type="GO" id="GO:0005524">
    <property type="term" value="F:ATP binding"/>
    <property type="evidence" value="ECO:0007669"/>
    <property type="project" value="UniProtKB-UniRule"/>
</dbReference>
<dbReference type="GO" id="GO:0016887">
    <property type="term" value="F:ATP hydrolysis activity"/>
    <property type="evidence" value="ECO:0007669"/>
    <property type="project" value="InterPro"/>
</dbReference>
<dbReference type="GO" id="GO:0000400">
    <property type="term" value="F:four-way junction DNA binding"/>
    <property type="evidence" value="ECO:0007669"/>
    <property type="project" value="UniProtKB-UniRule"/>
</dbReference>
<dbReference type="GO" id="GO:0009378">
    <property type="term" value="F:four-way junction helicase activity"/>
    <property type="evidence" value="ECO:0007669"/>
    <property type="project" value="InterPro"/>
</dbReference>
<dbReference type="GO" id="GO:0006310">
    <property type="term" value="P:DNA recombination"/>
    <property type="evidence" value="ECO:0007669"/>
    <property type="project" value="UniProtKB-UniRule"/>
</dbReference>
<dbReference type="GO" id="GO:0006281">
    <property type="term" value="P:DNA repair"/>
    <property type="evidence" value="ECO:0007669"/>
    <property type="project" value="UniProtKB-UniRule"/>
</dbReference>
<dbReference type="CDD" id="cd00009">
    <property type="entry name" value="AAA"/>
    <property type="match status" value="1"/>
</dbReference>
<dbReference type="Gene3D" id="1.10.8.60">
    <property type="match status" value="1"/>
</dbReference>
<dbReference type="Gene3D" id="3.40.50.300">
    <property type="entry name" value="P-loop containing nucleotide triphosphate hydrolases"/>
    <property type="match status" value="1"/>
</dbReference>
<dbReference type="Gene3D" id="1.10.10.10">
    <property type="entry name" value="Winged helix-like DNA-binding domain superfamily/Winged helix DNA-binding domain"/>
    <property type="match status" value="1"/>
</dbReference>
<dbReference type="HAMAP" id="MF_00016">
    <property type="entry name" value="DNA_HJ_migration_RuvB"/>
    <property type="match status" value="1"/>
</dbReference>
<dbReference type="InterPro" id="IPR003593">
    <property type="entry name" value="AAA+_ATPase"/>
</dbReference>
<dbReference type="InterPro" id="IPR041445">
    <property type="entry name" value="AAA_lid_4"/>
</dbReference>
<dbReference type="InterPro" id="IPR004605">
    <property type="entry name" value="DNA_helicase_Holl-junc_RuvB"/>
</dbReference>
<dbReference type="InterPro" id="IPR027417">
    <property type="entry name" value="P-loop_NTPase"/>
</dbReference>
<dbReference type="InterPro" id="IPR008824">
    <property type="entry name" value="RuvB-like_N"/>
</dbReference>
<dbReference type="InterPro" id="IPR008823">
    <property type="entry name" value="RuvB_C"/>
</dbReference>
<dbReference type="InterPro" id="IPR036388">
    <property type="entry name" value="WH-like_DNA-bd_sf"/>
</dbReference>
<dbReference type="InterPro" id="IPR036390">
    <property type="entry name" value="WH_DNA-bd_sf"/>
</dbReference>
<dbReference type="NCBIfam" id="NF000868">
    <property type="entry name" value="PRK00080.1"/>
    <property type="match status" value="1"/>
</dbReference>
<dbReference type="NCBIfam" id="TIGR00635">
    <property type="entry name" value="ruvB"/>
    <property type="match status" value="1"/>
</dbReference>
<dbReference type="PANTHER" id="PTHR42848">
    <property type="match status" value="1"/>
</dbReference>
<dbReference type="PANTHER" id="PTHR42848:SF1">
    <property type="entry name" value="HOLLIDAY JUNCTION BRANCH MIGRATION COMPLEX SUBUNIT RUVB"/>
    <property type="match status" value="1"/>
</dbReference>
<dbReference type="Pfam" id="PF17864">
    <property type="entry name" value="AAA_lid_4"/>
    <property type="match status" value="1"/>
</dbReference>
<dbReference type="Pfam" id="PF05491">
    <property type="entry name" value="RuvB_C"/>
    <property type="match status" value="1"/>
</dbReference>
<dbReference type="Pfam" id="PF05496">
    <property type="entry name" value="RuvB_N"/>
    <property type="match status" value="1"/>
</dbReference>
<dbReference type="PRINTS" id="PR00830">
    <property type="entry name" value="ENDOLAPTASE"/>
</dbReference>
<dbReference type="SMART" id="SM00382">
    <property type="entry name" value="AAA"/>
    <property type="match status" value="1"/>
</dbReference>
<dbReference type="SUPFAM" id="SSF52540">
    <property type="entry name" value="P-loop containing nucleoside triphosphate hydrolases"/>
    <property type="match status" value="1"/>
</dbReference>
<dbReference type="SUPFAM" id="SSF46785">
    <property type="entry name" value="Winged helix' DNA-binding domain"/>
    <property type="match status" value="1"/>
</dbReference>
<organism>
    <name type="scientific">Mycobacterium bovis (strain BCG / Pasteur 1173P2)</name>
    <dbReference type="NCBI Taxonomy" id="410289"/>
    <lineage>
        <taxon>Bacteria</taxon>
        <taxon>Bacillati</taxon>
        <taxon>Actinomycetota</taxon>
        <taxon>Actinomycetes</taxon>
        <taxon>Mycobacteriales</taxon>
        <taxon>Mycobacteriaceae</taxon>
        <taxon>Mycobacterium</taxon>
        <taxon>Mycobacterium tuberculosis complex</taxon>
    </lineage>
</organism>
<reference key="1">
    <citation type="journal article" date="2007" name="Proc. Natl. Acad. Sci. U.S.A.">
        <title>Genome plasticity of BCG and impact on vaccine efficacy.</title>
        <authorList>
            <person name="Brosch R."/>
            <person name="Gordon S.V."/>
            <person name="Garnier T."/>
            <person name="Eiglmeier K."/>
            <person name="Frigui W."/>
            <person name="Valenti P."/>
            <person name="Dos Santos S."/>
            <person name="Duthoy S."/>
            <person name="Lacroix C."/>
            <person name="Garcia-Pelayo C."/>
            <person name="Inwald J.K."/>
            <person name="Golby P."/>
            <person name="Garcia J.N."/>
            <person name="Hewinson R.G."/>
            <person name="Behr M.A."/>
            <person name="Quail M.A."/>
            <person name="Churcher C."/>
            <person name="Barrell B.G."/>
            <person name="Parkhill J."/>
            <person name="Cole S.T."/>
        </authorList>
    </citation>
    <scope>NUCLEOTIDE SEQUENCE [LARGE SCALE GENOMIC DNA]</scope>
    <source>
        <strain>BCG / Pasteur 1173P2</strain>
    </source>
</reference>
<gene>
    <name evidence="1" type="primary">ruvB</name>
    <name type="ordered locus">BCG_2615c</name>
</gene>
<proteinExistence type="inferred from homology"/>
<comment type="function">
    <text evidence="1">The RuvA-RuvB-RuvC complex processes Holliday junction (HJ) DNA during genetic recombination and DNA repair, while the RuvA-RuvB complex plays an important role in the rescue of blocked DNA replication forks via replication fork reversal (RFR). RuvA specifically binds to HJ cruciform DNA, conferring on it an open structure. The RuvB hexamer acts as an ATP-dependent pump, pulling dsDNA into and through the RuvAB complex. RuvB forms 2 homohexamers on either side of HJ DNA bound by 1 or 2 RuvA tetramers; 4 subunits per hexamer contact DNA at a time. Coordinated motions by a converter formed by DNA-disengaged RuvB subunits stimulates ATP hydrolysis and nucleotide exchange. Immobilization of the converter enables RuvB to convert the ATP-contained energy into a lever motion, pulling 2 nucleotides of DNA out of the RuvA tetramer per ATP hydrolyzed, thus driving DNA branch migration. The RuvB motors rotate together with the DNA substrate, which together with the progressing nucleotide cycle form the mechanistic basis for DNA recombination by continuous HJ branch migration. Branch migration allows RuvC to scan DNA until it finds its consensus sequence, where it cleaves and resolves cruciform DNA.</text>
</comment>
<comment type="catalytic activity">
    <reaction evidence="1">
        <text>ATP + H2O = ADP + phosphate + H(+)</text>
        <dbReference type="Rhea" id="RHEA:13065"/>
        <dbReference type="ChEBI" id="CHEBI:15377"/>
        <dbReference type="ChEBI" id="CHEBI:15378"/>
        <dbReference type="ChEBI" id="CHEBI:30616"/>
        <dbReference type="ChEBI" id="CHEBI:43474"/>
        <dbReference type="ChEBI" id="CHEBI:456216"/>
    </reaction>
</comment>
<comment type="subunit">
    <text evidence="1">Homohexamer. Forms an RuvA(8)-RuvB(12)-Holliday junction (HJ) complex. HJ DNA is sandwiched between 2 RuvA tetramers; dsDNA enters through RuvA and exits via RuvB. An RuvB hexamer assembles on each DNA strand where it exits the tetramer. Each RuvB hexamer is contacted by two RuvA subunits (via domain III) on 2 adjacent RuvB subunits; this complex drives branch migration. In the full resolvosome a probable DNA-RuvA(4)-RuvB(12)-RuvC(2) complex forms which resolves the HJ.</text>
</comment>
<comment type="subcellular location">
    <subcellularLocation>
        <location evidence="1">Cytoplasm</location>
    </subcellularLocation>
</comment>
<comment type="domain">
    <text evidence="1">Has 3 domains, the large (RuvB-L) and small ATPase (RuvB-S) domains and the C-terminal head (RuvB-H) domain. The head domain binds DNA, while the ATPase domains jointly bind ATP, ADP or are empty depending on the state of the subunit in the translocation cycle. During a single DNA translocation step the structure of each domain remains the same, but their relative positions change.</text>
</comment>
<comment type="similarity">
    <text evidence="1">Belongs to the RuvB family.</text>
</comment>
<feature type="chain" id="PRO_1000001430" description="Holliday junction branch migration complex subunit RuvB">
    <location>
        <begin position="1"/>
        <end position="344"/>
    </location>
</feature>
<feature type="region of interest" description="Large ATPase domain (RuvB-L)" evidence="1">
    <location>
        <begin position="1"/>
        <end position="185"/>
    </location>
</feature>
<feature type="region of interest" description="Small ATPAse domain (RuvB-S)" evidence="1">
    <location>
        <begin position="186"/>
        <end position="256"/>
    </location>
</feature>
<feature type="region of interest" description="Head domain (RuvB-H)" evidence="1">
    <location>
        <begin position="259"/>
        <end position="344"/>
    </location>
</feature>
<feature type="binding site" evidence="1">
    <location>
        <position position="24"/>
    </location>
    <ligand>
        <name>ATP</name>
        <dbReference type="ChEBI" id="CHEBI:30616"/>
    </ligand>
</feature>
<feature type="binding site" evidence="1">
    <location>
        <position position="25"/>
    </location>
    <ligand>
        <name>ATP</name>
        <dbReference type="ChEBI" id="CHEBI:30616"/>
    </ligand>
</feature>
<feature type="binding site" evidence="1">
    <location>
        <position position="66"/>
    </location>
    <ligand>
        <name>ATP</name>
        <dbReference type="ChEBI" id="CHEBI:30616"/>
    </ligand>
</feature>
<feature type="binding site" evidence="1">
    <location>
        <position position="69"/>
    </location>
    <ligand>
        <name>ATP</name>
        <dbReference type="ChEBI" id="CHEBI:30616"/>
    </ligand>
</feature>
<feature type="binding site" evidence="1">
    <location>
        <position position="70"/>
    </location>
    <ligand>
        <name>ATP</name>
        <dbReference type="ChEBI" id="CHEBI:30616"/>
    </ligand>
</feature>
<feature type="binding site" evidence="1">
    <location>
        <position position="70"/>
    </location>
    <ligand>
        <name>Mg(2+)</name>
        <dbReference type="ChEBI" id="CHEBI:18420"/>
    </ligand>
</feature>
<feature type="binding site" evidence="1">
    <location>
        <position position="71"/>
    </location>
    <ligand>
        <name>ATP</name>
        <dbReference type="ChEBI" id="CHEBI:30616"/>
    </ligand>
</feature>
<feature type="binding site" evidence="1">
    <location>
        <begin position="132"/>
        <end position="134"/>
    </location>
    <ligand>
        <name>ATP</name>
        <dbReference type="ChEBI" id="CHEBI:30616"/>
    </ligand>
</feature>
<feature type="binding site" evidence="1">
    <location>
        <position position="175"/>
    </location>
    <ligand>
        <name>ATP</name>
        <dbReference type="ChEBI" id="CHEBI:30616"/>
    </ligand>
</feature>
<feature type="binding site" evidence="1">
    <location>
        <position position="185"/>
    </location>
    <ligand>
        <name>ATP</name>
        <dbReference type="ChEBI" id="CHEBI:30616"/>
    </ligand>
</feature>
<feature type="binding site" evidence="1">
    <location>
        <position position="222"/>
    </location>
    <ligand>
        <name>ATP</name>
        <dbReference type="ChEBI" id="CHEBI:30616"/>
    </ligand>
</feature>
<feature type="binding site" evidence="1">
    <location>
        <position position="314"/>
    </location>
    <ligand>
        <name>DNA</name>
        <dbReference type="ChEBI" id="CHEBI:16991"/>
    </ligand>
</feature>
<feature type="binding site" evidence="1">
    <location>
        <position position="319"/>
    </location>
    <ligand>
        <name>DNA</name>
        <dbReference type="ChEBI" id="CHEBI:16991"/>
    </ligand>
</feature>
<sequence length="344" mass="36627">MTERSDRDVSPALTVGEGDIDVSLRPRSLREFIGQPRVREQLQLVIEGAKNRGGTPDHILLSGPPGLGKTSLAMIIAAELGSSLRVTSGPALERAGDLAAMLSNLVEHDVLFIDEIHRIARPAEEMLYLAMEDFRVDVVVGKGPGATSIPLEVAPFTLVGATTRSGALTGPLRDRFGFTAHMDFYEPAELERVLARSAGILGIELGADAGAEIARRSRGTPRIANRLLRRVRDFAEVRADGVITRDVAKAALEVYDVDELGLDRLDRAVLSALTRSFGGGPVGVSTLAVAVGEEAATVEEVCEPFLVRAGMVARTPRGRVATALAWTHLGMTPPVGASQPGLFE</sequence>
<name>RUVB_MYCBP</name>
<keyword id="KW-0067">ATP-binding</keyword>
<keyword id="KW-0963">Cytoplasm</keyword>
<keyword id="KW-0227">DNA damage</keyword>
<keyword id="KW-0233">DNA recombination</keyword>
<keyword id="KW-0234">DNA repair</keyword>
<keyword id="KW-0238">DNA-binding</keyword>
<keyword id="KW-0378">Hydrolase</keyword>
<keyword id="KW-0547">Nucleotide-binding</keyword>
<accession>A1KLU0</accession>
<evidence type="ECO:0000255" key="1">
    <source>
        <dbReference type="HAMAP-Rule" id="MF_00016"/>
    </source>
</evidence>